<feature type="chain" id="PRO_0000346870" description="Anti-FlhC(2)FlhD(4) factor YdiV">
    <location>
        <begin position="1"/>
        <end position="237"/>
    </location>
</feature>
<feature type="domain" description="EAL">
    <location>
        <begin position="1"/>
        <end position="237"/>
    </location>
</feature>
<feature type="mutagenesis site" description="No effect on motility." evidence="3">
    <original>E</original>
    <variation>A</variation>
    <location>
        <position position="29"/>
    </location>
</feature>
<comment type="function">
    <text evidence="1 2 3">Acts as an anti-FlhC(2)FlhD(4) factor by binding to FlhD, decreasing its ability to bind DNA, and thus negatively regulates expression of flagellar class II operons, decreasing motility in nutrient-poor medium. Required for resistance to host phagocyte oxidase. Suppresses killing of macrophages, while promoting resistance to hydrogen peroxide. Data regarding c-di-GMP is controversial; suppresses bacterial c-di-GMP levels (PubMed:15882417) but neither synthesizes nor degrades c-di-GMP (PubMed:19376870).</text>
</comment>
<comment type="subunit">
    <text evidence="3">Interacts with FlhD in the FlhC(2)FlhD(4) heterohexamer, inhibiting its ability to activate transcription.</text>
</comment>
<comment type="interaction">
    <interactant intactId="EBI-6413835">
        <id>Q8ZPS6</id>
    </interactant>
    <interactant intactId="EBI-6413853">
        <id>P0A2R2</id>
        <label>flhD</label>
    </interactant>
    <organismsDiffer>false</organismsDiffer>
    <experiments>2</experiments>
</comment>
<comment type="induction">
    <text evidence="3">Induced in nutrient-poor medium (at protein level).</text>
</comment>
<comment type="disruption phenotype">
    <text evidence="1 2 3">Decreased bacterial resistance to hydrogen peroxide and accelerated bacterial killing of macrophages. increased levels of c-di-GMP (PubMed:15882417). Down-regulation of rdar morphology, 50% reduction in CsgD expression, cellulose and curli fimbriae, increased swimming and swarming. Decrease in c-di-GMP levels (PubMed:19376870). Derepresses transcription of flagellar class II operons in nutrient-poor medium.</text>
</comment>
<comment type="miscellaneous">
    <text>The multicellular rdar morphotype is characterized by the expression of the adhesive extracellular matrix components cellulose and curli fimbriae.</text>
</comment>
<comment type="similarity">
    <text evidence="4">Belongs to the YdiV family.</text>
</comment>
<comment type="caution">
    <text evidence="5 6 7">Has been proposed to be involved in c-di-GMP turnover (PubMed:15882417), but also not be involved in its turnover (PubMed:19376870). Mutagenesis of Glu-29 in the EAL domain suggests if this protein has c-di-GMP phosphdiesterase activity it is not involved in motility regulation (PubMed:21278297). Note that (PubMed:15882417) and (PubMed:19376870) experiments were done in strain 14028, which is not an LT2 derivative.</text>
</comment>
<accession>Q8ZPS6</accession>
<evidence type="ECO:0000269" key="1">
    <source>
    </source>
</evidence>
<evidence type="ECO:0000269" key="2">
    <source>
    </source>
</evidence>
<evidence type="ECO:0000269" key="3">
    <source>
    </source>
</evidence>
<evidence type="ECO:0000305" key="4"/>
<evidence type="ECO:0000305" key="5">
    <source>
    </source>
</evidence>
<evidence type="ECO:0000305" key="6">
    <source>
    </source>
</evidence>
<evidence type="ECO:0000305" key="7">
    <source>
    </source>
</evidence>
<proteinExistence type="evidence at protein level"/>
<name>YDIV_SALTY</name>
<sequence length="237" mass="26424">MIASLDELYHSELFFLPVMDENARLVGLEIIATFAAEDGAVRMPTELVAPRLSVEEQYCLFVEKLALLETCQHFFIQHKLIAWLNLPPAISDLLLLDSELFSRAARFPFLELAINENYPGLNQGKNNETLANLAMHFPLMLANFGAGEASTKAIFDGLFKRVMLDKNFIQQRAEMISFEPFMHAIVAQISSSCESLMIAGIDTEAMFARAAPLGFSAFQGGLWPPVPVSQLIKLVQR</sequence>
<dbReference type="EMBL" id="AE006468">
    <property type="protein sequence ID" value="AAL20269.1"/>
    <property type="molecule type" value="Genomic_DNA"/>
</dbReference>
<dbReference type="RefSeq" id="NP_460310.1">
    <property type="nucleotide sequence ID" value="NC_003197.2"/>
</dbReference>
<dbReference type="RefSeq" id="WP_000562005.1">
    <property type="nucleotide sequence ID" value="NC_003197.2"/>
</dbReference>
<dbReference type="SMR" id="Q8ZPS6"/>
<dbReference type="IntAct" id="Q8ZPS6">
    <property type="interactions" value="2"/>
</dbReference>
<dbReference type="STRING" id="99287.STM1344"/>
<dbReference type="PaxDb" id="99287-STM1344"/>
<dbReference type="GeneID" id="1252862"/>
<dbReference type="KEGG" id="stm:STM1344"/>
<dbReference type="PATRIC" id="fig|99287.12.peg.1427"/>
<dbReference type="HOGENOM" id="CLU_089254_1_1_6"/>
<dbReference type="OMA" id="LSFEPFM"/>
<dbReference type="PhylomeDB" id="Q8ZPS6"/>
<dbReference type="BioCyc" id="SENT99287:STM1344-MONOMER"/>
<dbReference type="Proteomes" id="UP000001014">
    <property type="component" value="Chromosome"/>
</dbReference>
<dbReference type="GO" id="GO:0005886">
    <property type="term" value="C:plasma membrane"/>
    <property type="evidence" value="ECO:0000318"/>
    <property type="project" value="GO_Central"/>
</dbReference>
<dbReference type="GO" id="GO:0071111">
    <property type="term" value="F:cyclic-guanylate-specific phosphodiesterase activity"/>
    <property type="evidence" value="ECO:0000318"/>
    <property type="project" value="GO_Central"/>
</dbReference>
<dbReference type="GO" id="GO:1900190">
    <property type="term" value="P:regulation of single-species biofilm formation"/>
    <property type="evidence" value="ECO:0000318"/>
    <property type="project" value="GO_Central"/>
</dbReference>
<dbReference type="Gene3D" id="3.20.20.450">
    <property type="entry name" value="EAL domain"/>
    <property type="match status" value="1"/>
</dbReference>
<dbReference type="InterPro" id="IPR050706">
    <property type="entry name" value="Cyclic-di-GMP_PDE-like"/>
</dbReference>
<dbReference type="InterPro" id="IPR001633">
    <property type="entry name" value="EAL_dom"/>
</dbReference>
<dbReference type="InterPro" id="IPR035919">
    <property type="entry name" value="EAL_sf"/>
</dbReference>
<dbReference type="PANTHER" id="PTHR33121:SF69">
    <property type="entry name" value="ANTI-FLHC(2)FLHD(4) FACTOR YDIV-RELATED"/>
    <property type="match status" value="1"/>
</dbReference>
<dbReference type="PANTHER" id="PTHR33121">
    <property type="entry name" value="CYCLIC DI-GMP PHOSPHODIESTERASE PDEF"/>
    <property type="match status" value="1"/>
</dbReference>
<dbReference type="Pfam" id="PF00563">
    <property type="entry name" value="EAL"/>
    <property type="match status" value="1"/>
</dbReference>
<dbReference type="SUPFAM" id="SSF141868">
    <property type="entry name" value="EAL domain-like"/>
    <property type="match status" value="1"/>
</dbReference>
<protein>
    <recommendedName>
        <fullName>Anti-FlhC(2)FlhD(4) factor YdiV</fullName>
    </recommendedName>
    <alternativeName>
        <fullName>EAL-like protein YdiV</fullName>
    </alternativeName>
    <alternativeName>
        <fullName>c-di-GMP regulator CdgR</fullName>
    </alternativeName>
</protein>
<keyword id="KW-1185">Reference proteome</keyword>
<keyword id="KW-0678">Repressor</keyword>
<keyword id="KW-0804">Transcription</keyword>
<keyword id="KW-0805">Transcription regulation</keyword>
<keyword id="KW-0843">Virulence</keyword>
<organism>
    <name type="scientific">Salmonella typhimurium (strain LT2 / SGSC1412 / ATCC 700720)</name>
    <dbReference type="NCBI Taxonomy" id="99287"/>
    <lineage>
        <taxon>Bacteria</taxon>
        <taxon>Pseudomonadati</taxon>
        <taxon>Pseudomonadota</taxon>
        <taxon>Gammaproteobacteria</taxon>
        <taxon>Enterobacterales</taxon>
        <taxon>Enterobacteriaceae</taxon>
        <taxon>Salmonella</taxon>
    </lineage>
</organism>
<gene>
    <name type="primary">ydiV</name>
    <name type="synonym">cdgR</name>
    <name type="ordered locus">STM1344</name>
</gene>
<reference key="1">
    <citation type="journal article" date="2001" name="Nature">
        <title>Complete genome sequence of Salmonella enterica serovar Typhimurium LT2.</title>
        <authorList>
            <person name="McClelland M."/>
            <person name="Sanderson K.E."/>
            <person name="Spieth J."/>
            <person name="Clifton S.W."/>
            <person name="Latreille P."/>
            <person name="Courtney L."/>
            <person name="Porwollik S."/>
            <person name="Ali J."/>
            <person name="Dante M."/>
            <person name="Du F."/>
            <person name="Hou S."/>
            <person name="Layman D."/>
            <person name="Leonard S."/>
            <person name="Nguyen C."/>
            <person name="Scott K."/>
            <person name="Holmes A."/>
            <person name="Grewal N."/>
            <person name="Mulvaney E."/>
            <person name="Ryan E."/>
            <person name="Sun H."/>
            <person name="Florea L."/>
            <person name="Miller W."/>
            <person name="Stoneking T."/>
            <person name="Nhan M."/>
            <person name="Waterston R."/>
            <person name="Wilson R.K."/>
        </authorList>
    </citation>
    <scope>NUCLEOTIDE SEQUENCE [LARGE SCALE GENOMIC DNA]</scope>
    <source>
        <strain>LT2 / SGSC1412 / ATCC 700720</strain>
    </source>
</reference>
<reference key="2">
    <citation type="journal article" date="2005" name="Mol. Microbiol.">
        <title>A glutamate-alanine-leucine (EAL) domain protein of Salmonella controls bacterial survival in mice, antioxidant defence and killing of macrophages: role of cyclic diGMP.</title>
        <authorList>
            <person name="Hisert K.B."/>
            <person name="MacCoss M."/>
            <person name="Shiloh M.U."/>
            <person name="Darwin K.H."/>
            <person name="Singh S."/>
            <person name="Jones R.A."/>
            <person name="Ehrt S."/>
            <person name="Zhang Z."/>
            <person name="Gaffney B.L."/>
            <person name="Gandotra S."/>
            <person name="Holden D.W."/>
            <person name="Murray D."/>
            <person name="Nathan C."/>
        </authorList>
    </citation>
    <scope>FUNCTION IN VIRULENCE</scope>
    <scope>DISRUPTION PHENOTYPE</scope>
    <source>
        <strain>14028</strain>
    </source>
</reference>
<reference key="3">
    <citation type="journal article" date="2009" name="J. Bacteriol.">
        <title>A role for the EAL-like protein STM1344 in regulation of CsgD expression and motility in Salmonella enterica serovar Typhimurium.</title>
        <authorList>
            <person name="Simm R."/>
            <person name="Remminghorst U."/>
            <person name="Ahmad I."/>
            <person name="Zakikhany K."/>
            <person name="Romling U."/>
        </authorList>
    </citation>
    <scope>LACK OF C-DI-GMP PHOSPHODIESTERASE OR DIGUANYLATE CYCLASE ACTIVITY</scope>
    <scope>DISRUPTION PHENOTYPE</scope>
    <source>
        <strain>14028</strain>
    </source>
</reference>
<reference key="4">
    <citation type="journal article" date="2011" name="J. Bacteriol.">
        <title>EAL domain protein YdiV acts as an anti-FlhD4C2 factor responsible for nutritional control of the flagellar regulon in Salmonella enterica Serovar Typhimurium.</title>
        <authorList>
            <person name="Wada T."/>
            <person name="Morizane T."/>
            <person name="Abo T."/>
            <person name="Tominaga A."/>
            <person name="Inoue-Tanaka K."/>
            <person name="Kutsukake K."/>
        </authorList>
    </citation>
    <scope>FUNCTION IN REPRESSION OF MOTILITY</scope>
    <scope>INTERACTION WITH FLHD</scope>
    <scope>INDUCTION</scope>
    <scope>DISRUPTION PHENOTYPE</scope>
    <scope>MUTAGENESIS OF GLU-29</scope>
    <source>
        <strain>LT2 / SGSC1412 / ATCC 700720</strain>
    </source>
</reference>